<organism>
    <name type="scientific">Bordetella parapertussis (strain 12822 / ATCC BAA-587 / NCTC 13253)</name>
    <dbReference type="NCBI Taxonomy" id="257311"/>
    <lineage>
        <taxon>Bacteria</taxon>
        <taxon>Pseudomonadati</taxon>
        <taxon>Pseudomonadota</taxon>
        <taxon>Betaproteobacteria</taxon>
        <taxon>Burkholderiales</taxon>
        <taxon>Alcaligenaceae</taxon>
        <taxon>Bordetella</taxon>
    </lineage>
</organism>
<sequence length="104" mass="12312">MRDPLFKGCTRPAMLMGVPATPLAVCSGTIALLGIWFSIAFLALFPVALLAMRIMIRRDDQQFRLIWLYLRMRWLSRDRTHAFWQSTVYAPLRYAERRRRLRKP</sequence>
<comment type="subcellular location">
    <subcellularLocation>
        <location evidence="2">Cell membrane</location>
        <topology evidence="2">Single-pass membrane protein</topology>
    </subcellularLocation>
</comment>
<comment type="similarity">
    <text evidence="2">Belongs to the virB3 family.</text>
</comment>
<comment type="caution">
    <text evidence="2">B.parapertussis and B.bronchiseptica seem not to produce the pertussis toxin (S1, S2, S4, S5 and S3) and ptl proteins (PtlA, PtlB, PtlC, PtlD, PtlE, PtlF, PtlG, PtlH and PtlI) in vivo due to changes in the promoter region of the ptx-ptl operon. However, it is possible that their promoter is active under certain, as-yet-undefined conditions and that B.parapertussis and B.bronchiseptica are therefore capable of producing these proteins.</text>
</comment>
<keyword id="KW-1003">Cell membrane</keyword>
<keyword id="KW-0472">Membrane</keyword>
<keyword id="KW-0812">Transmembrane</keyword>
<keyword id="KW-1133">Transmembrane helix</keyword>
<name>PTLB_BORPA</name>
<evidence type="ECO:0000255" key="1"/>
<evidence type="ECO:0000305" key="2"/>
<protein>
    <recommendedName>
        <fullName>Type IV secretion system protein PtlB homolog</fullName>
    </recommendedName>
</protein>
<accession>Q7W2U4</accession>
<proteinExistence type="inferred from homology"/>
<reference key="1">
    <citation type="journal article" date="2003" name="Nat. Genet.">
        <title>Comparative analysis of the genome sequences of Bordetella pertussis, Bordetella parapertussis and Bordetella bronchiseptica.</title>
        <authorList>
            <person name="Parkhill J."/>
            <person name="Sebaihia M."/>
            <person name="Preston A."/>
            <person name="Murphy L.D."/>
            <person name="Thomson N.R."/>
            <person name="Harris D.E."/>
            <person name="Holden M.T.G."/>
            <person name="Churcher C.M."/>
            <person name="Bentley S.D."/>
            <person name="Mungall K.L."/>
            <person name="Cerdeno-Tarraga A.-M."/>
            <person name="Temple L."/>
            <person name="James K.D."/>
            <person name="Harris B."/>
            <person name="Quail M.A."/>
            <person name="Achtman M."/>
            <person name="Atkin R."/>
            <person name="Baker S."/>
            <person name="Basham D."/>
            <person name="Bason N."/>
            <person name="Cherevach I."/>
            <person name="Chillingworth T."/>
            <person name="Collins M."/>
            <person name="Cronin A."/>
            <person name="Davis P."/>
            <person name="Doggett J."/>
            <person name="Feltwell T."/>
            <person name="Goble A."/>
            <person name="Hamlin N."/>
            <person name="Hauser H."/>
            <person name="Holroyd S."/>
            <person name="Jagels K."/>
            <person name="Leather S."/>
            <person name="Moule S."/>
            <person name="Norberczak H."/>
            <person name="O'Neil S."/>
            <person name="Ormond D."/>
            <person name="Price C."/>
            <person name="Rabbinowitsch E."/>
            <person name="Rutter S."/>
            <person name="Sanders M."/>
            <person name="Saunders D."/>
            <person name="Seeger K."/>
            <person name="Sharp S."/>
            <person name="Simmonds M."/>
            <person name="Skelton J."/>
            <person name="Squares R."/>
            <person name="Squares S."/>
            <person name="Stevens K."/>
            <person name="Unwin L."/>
            <person name="Whitehead S."/>
            <person name="Barrell B.G."/>
            <person name="Maskell D.J."/>
        </authorList>
    </citation>
    <scope>NUCLEOTIDE SEQUENCE [LARGE SCALE GENOMIC DNA]</scope>
    <source>
        <strain>12822 / ATCC BAA-587 / NCTC 13253</strain>
    </source>
</reference>
<reference key="2">
    <citation type="journal article" date="1987" name="J. Bacteriol.">
        <title>Bordetella parapertussis and Bordetella bronchiseptica contain transcriptionally silent pertussis toxin genes.</title>
        <authorList>
            <person name="Arico B."/>
            <person name="Rappuoli R."/>
        </authorList>
    </citation>
    <scope>TRANSCRIPTIONAL SILENCING</scope>
    <source>
        <strain>ATCC 9305</strain>
    </source>
</reference>
<reference key="3">
    <citation type="journal article" date="1996" name="Infect. Immun.">
        <title>Analysis of proteins encoded by the ptx and ptl genes of Bordetella bronchiseptica and Bordetella parapertussis.</title>
        <authorList>
            <person name="Hausman S.Z."/>
            <person name="Cherry J.D."/>
            <person name="Heininger U."/>
            <person name="Wirsing von Koenig C.H."/>
            <person name="Burns D.L."/>
        </authorList>
    </citation>
    <scope>POSSIBLE EXPRESSION OF PTL AND PTX PROTEINS UNDER CONDITIONS DIFFERENT FROM B.PERTUSSIS EXPRESSION CONDITIONS</scope>
    <source>
        <strain>10978</strain>
        <strain>13449</strain>
    </source>
</reference>
<gene>
    <name type="primary">ptlB</name>
    <name type="ordered locus">BPP4310</name>
</gene>
<feature type="chain" id="PRO_0000287408" description="Type IV secretion system protein PtlB homolog">
    <location>
        <begin position="1"/>
        <end position="104"/>
    </location>
</feature>
<feature type="transmembrane region" description="Helical" evidence="1">
    <location>
        <begin position="30"/>
        <end position="50"/>
    </location>
</feature>
<dbReference type="EMBL" id="BX640436">
    <property type="protein sequence ID" value="CAE39588.1"/>
    <property type="molecule type" value="Genomic_DNA"/>
</dbReference>
<dbReference type="RefSeq" id="WP_010929494.1">
    <property type="nucleotide sequence ID" value="NC_002928.3"/>
</dbReference>
<dbReference type="SMR" id="Q7W2U4"/>
<dbReference type="GeneID" id="69599986"/>
<dbReference type="GeneID" id="93206108"/>
<dbReference type="KEGG" id="bpa:BPP4310"/>
<dbReference type="HOGENOM" id="CLU_158477_0_0_4"/>
<dbReference type="Proteomes" id="UP000001421">
    <property type="component" value="Chromosome"/>
</dbReference>
<dbReference type="GO" id="GO:0005886">
    <property type="term" value="C:plasma membrane"/>
    <property type="evidence" value="ECO:0007669"/>
    <property type="project" value="UniProtKB-SubCell"/>
</dbReference>
<dbReference type="InterPro" id="IPR007792">
    <property type="entry name" value="T4SS_VirB3/TrbD/AvhB"/>
</dbReference>
<dbReference type="Pfam" id="PF05101">
    <property type="entry name" value="VirB3"/>
    <property type="match status" value="1"/>
</dbReference>